<organism>
    <name type="scientific">Chlamydia pneumoniae</name>
    <name type="common">Chlamydophila pneumoniae</name>
    <dbReference type="NCBI Taxonomy" id="83558"/>
    <lineage>
        <taxon>Bacteria</taxon>
        <taxon>Pseudomonadati</taxon>
        <taxon>Chlamydiota</taxon>
        <taxon>Chlamydiia</taxon>
        <taxon>Chlamydiales</taxon>
        <taxon>Chlamydiaceae</taxon>
        <taxon>Chlamydia/Chlamydophila group</taxon>
        <taxon>Chlamydia</taxon>
    </lineage>
</organism>
<evidence type="ECO:0000250" key="1"/>
<evidence type="ECO:0000256" key="2">
    <source>
        <dbReference type="SAM" id="MobiDB-lite"/>
    </source>
</evidence>
<evidence type="ECO:0000305" key="3"/>
<dbReference type="EMBL" id="AE001363">
    <property type="protein sequence ID" value="AAD19097.1"/>
    <property type="molecule type" value="Genomic_DNA"/>
</dbReference>
<dbReference type="EMBL" id="AE002161">
    <property type="protein sequence ID" value="AAF38685.1"/>
    <property type="molecule type" value="Genomic_DNA"/>
</dbReference>
<dbReference type="EMBL" id="BA000008">
    <property type="protein sequence ID" value="BAA99169.1"/>
    <property type="molecule type" value="Genomic_DNA"/>
</dbReference>
<dbReference type="EMBL" id="AE009440">
    <property type="protein sequence ID" value="AAP98927.1"/>
    <property type="molecule type" value="Genomic_DNA"/>
</dbReference>
<dbReference type="PIR" id="F72013">
    <property type="entry name" value="F72013"/>
</dbReference>
<dbReference type="PIR" id="G86610">
    <property type="entry name" value="G86610"/>
</dbReference>
<dbReference type="RefSeq" id="NP_225154.1">
    <property type="nucleotide sequence ID" value="NC_000922.1"/>
</dbReference>
<dbReference type="RefSeq" id="WP_010883594.1">
    <property type="nucleotide sequence ID" value="NZ_LN847257.1"/>
</dbReference>
<dbReference type="SMR" id="Q9Z6U7"/>
<dbReference type="STRING" id="406984.CPK_ORF01120"/>
<dbReference type="GeneID" id="45051018"/>
<dbReference type="KEGG" id="cpa:CP_0899"/>
<dbReference type="KEGG" id="cpj:rl32"/>
<dbReference type="KEGG" id="cpn:CPn_0961"/>
<dbReference type="KEGG" id="cpt:CpB0998"/>
<dbReference type="eggNOG" id="COG0333">
    <property type="taxonomic scope" value="Bacteria"/>
</dbReference>
<dbReference type="HOGENOM" id="CLU_129084_1_3_0"/>
<dbReference type="OMA" id="PHRVCPH"/>
<dbReference type="Proteomes" id="UP000000583">
    <property type="component" value="Chromosome"/>
</dbReference>
<dbReference type="Proteomes" id="UP000000801">
    <property type="component" value="Chromosome"/>
</dbReference>
<dbReference type="GO" id="GO:0015934">
    <property type="term" value="C:large ribosomal subunit"/>
    <property type="evidence" value="ECO:0007669"/>
    <property type="project" value="InterPro"/>
</dbReference>
<dbReference type="GO" id="GO:0003735">
    <property type="term" value="F:structural constituent of ribosome"/>
    <property type="evidence" value="ECO:0007669"/>
    <property type="project" value="InterPro"/>
</dbReference>
<dbReference type="GO" id="GO:0006412">
    <property type="term" value="P:translation"/>
    <property type="evidence" value="ECO:0007669"/>
    <property type="project" value="UniProtKB-UniRule"/>
</dbReference>
<dbReference type="HAMAP" id="MF_00340">
    <property type="entry name" value="Ribosomal_bL32"/>
    <property type="match status" value="1"/>
</dbReference>
<dbReference type="InterPro" id="IPR002677">
    <property type="entry name" value="Ribosomal_bL32"/>
</dbReference>
<dbReference type="InterPro" id="IPR044957">
    <property type="entry name" value="Ribosomal_bL32_bact"/>
</dbReference>
<dbReference type="InterPro" id="IPR011332">
    <property type="entry name" value="Ribosomal_zn-bd"/>
</dbReference>
<dbReference type="NCBIfam" id="TIGR01031">
    <property type="entry name" value="rpmF_bact"/>
    <property type="match status" value="1"/>
</dbReference>
<dbReference type="PANTHER" id="PTHR35534">
    <property type="entry name" value="50S RIBOSOMAL PROTEIN L32"/>
    <property type="match status" value="1"/>
</dbReference>
<dbReference type="PANTHER" id="PTHR35534:SF1">
    <property type="entry name" value="LARGE RIBOSOMAL SUBUNIT PROTEIN BL32"/>
    <property type="match status" value="1"/>
</dbReference>
<dbReference type="Pfam" id="PF01783">
    <property type="entry name" value="Ribosomal_L32p"/>
    <property type="match status" value="1"/>
</dbReference>
<dbReference type="SUPFAM" id="SSF57829">
    <property type="entry name" value="Zn-binding ribosomal proteins"/>
    <property type="match status" value="1"/>
</dbReference>
<reference key="1">
    <citation type="journal article" date="1999" name="Nat. Genet.">
        <title>Comparative genomes of Chlamydia pneumoniae and C. trachomatis.</title>
        <authorList>
            <person name="Kalman S."/>
            <person name="Mitchell W.P."/>
            <person name="Marathe R."/>
            <person name="Lammel C.J."/>
            <person name="Fan J."/>
            <person name="Hyman R.W."/>
            <person name="Olinger L."/>
            <person name="Grimwood J."/>
            <person name="Davis R.W."/>
            <person name="Stephens R.S."/>
        </authorList>
    </citation>
    <scope>NUCLEOTIDE SEQUENCE [LARGE SCALE GENOMIC DNA]</scope>
    <source>
        <strain>CWL029</strain>
    </source>
</reference>
<reference key="2">
    <citation type="journal article" date="2000" name="Nucleic Acids Res.">
        <title>Genome sequences of Chlamydia trachomatis MoPn and Chlamydia pneumoniae AR39.</title>
        <authorList>
            <person name="Read T.D."/>
            <person name="Brunham R.C."/>
            <person name="Shen C."/>
            <person name="Gill S.R."/>
            <person name="Heidelberg J.F."/>
            <person name="White O."/>
            <person name="Hickey E.K."/>
            <person name="Peterson J.D."/>
            <person name="Utterback T.R."/>
            <person name="Berry K.J."/>
            <person name="Bass S."/>
            <person name="Linher K.D."/>
            <person name="Weidman J.F."/>
            <person name="Khouri H.M."/>
            <person name="Craven B."/>
            <person name="Bowman C."/>
            <person name="Dodson R.J."/>
            <person name="Gwinn M.L."/>
            <person name="Nelson W.C."/>
            <person name="DeBoy R.T."/>
            <person name="Kolonay J.F."/>
            <person name="McClarty G."/>
            <person name="Salzberg S.L."/>
            <person name="Eisen J.A."/>
            <person name="Fraser C.M."/>
        </authorList>
    </citation>
    <scope>NUCLEOTIDE SEQUENCE [LARGE SCALE GENOMIC DNA]</scope>
    <source>
        <strain>AR39</strain>
    </source>
</reference>
<reference key="3">
    <citation type="journal article" date="2000" name="Nucleic Acids Res.">
        <title>Comparison of whole genome sequences of Chlamydia pneumoniae J138 from Japan and CWL029 from USA.</title>
        <authorList>
            <person name="Shirai M."/>
            <person name="Hirakawa H."/>
            <person name="Kimoto M."/>
            <person name="Tabuchi M."/>
            <person name="Kishi F."/>
            <person name="Ouchi K."/>
            <person name="Shiba T."/>
            <person name="Ishii K."/>
            <person name="Hattori M."/>
            <person name="Kuhara S."/>
            <person name="Nakazawa T."/>
        </authorList>
    </citation>
    <scope>NUCLEOTIDE SEQUENCE [LARGE SCALE GENOMIC DNA]</scope>
    <source>
        <strain>J138</strain>
    </source>
</reference>
<reference key="4">
    <citation type="submission" date="2002-05" db="EMBL/GenBank/DDBJ databases">
        <title>The genome sequence of Chlamydia pneumoniae TW183 and comparison with other Chlamydia strains based on whole genome sequence analysis.</title>
        <authorList>
            <person name="Geng M.M."/>
            <person name="Schuhmacher A."/>
            <person name="Muehldorfer I."/>
            <person name="Bensch K.W."/>
            <person name="Schaefer K.P."/>
            <person name="Schneider S."/>
            <person name="Pohl T."/>
            <person name="Essig A."/>
            <person name="Marre R."/>
            <person name="Melchers K."/>
        </authorList>
    </citation>
    <scope>NUCLEOTIDE SEQUENCE [LARGE SCALE GENOMIC DNA]</scope>
    <source>
        <strain>TW-183</strain>
    </source>
</reference>
<sequence>MAVPRNRHSNARKNIRRSHDAKKACHAAKCSNCKHALLPHTICPSCGFYNGKAVMTVEKK</sequence>
<name>RL32_CHLPN</name>
<keyword id="KW-0687">Ribonucleoprotein</keyword>
<keyword id="KW-0689">Ribosomal protein</keyword>
<comment type="similarity">
    <text evidence="3">Belongs to the bacterial ribosomal protein bL32 family.</text>
</comment>
<feature type="initiator methionine" description="Removed" evidence="1">
    <location>
        <position position="1"/>
    </location>
</feature>
<feature type="chain" id="PRO_0000172327" description="Large ribosomal subunit protein bL32">
    <location>
        <begin position="2"/>
        <end position="60"/>
    </location>
</feature>
<feature type="region of interest" description="Disordered" evidence="2">
    <location>
        <begin position="1"/>
        <end position="20"/>
    </location>
</feature>
<feature type="compositionally biased region" description="Basic residues" evidence="2">
    <location>
        <begin position="1"/>
        <end position="16"/>
    </location>
</feature>
<proteinExistence type="inferred from homology"/>
<gene>
    <name type="primary">rpmF</name>
    <name type="synonym">rl32</name>
    <name type="ordered locus">CPn_0961</name>
    <name type="ordered locus">CP_0899</name>
    <name type="ordered locus">CpB0998</name>
</gene>
<accession>Q9Z6U7</accession>
<accession>Q9JQ52</accession>
<protein>
    <recommendedName>
        <fullName evidence="3">Large ribosomal subunit protein bL32</fullName>
    </recommendedName>
    <alternativeName>
        <fullName>50S ribosomal protein L32</fullName>
    </alternativeName>
</protein>